<accession>Q9BZ97</accession>
<evidence type="ECO:0000250" key="1"/>
<evidence type="ECO:0000255" key="2"/>
<evidence type="ECO:0000305" key="3"/>
<reference key="1">
    <citation type="journal article" date="2003" name="Nature">
        <title>The male-specific region of the human Y chromosome is a mosaic of discrete sequence classes.</title>
        <authorList>
            <person name="Skaletsky H."/>
            <person name="Kuroda-Kawaguchi T."/>
            <person name="Minx P.J."/>
            <person name="Cordum H.S."/>
            <person name="Hillier L.W."/>
            <person name="Brown L.G."/>
            <person name="Repping S."/>
            <person name="Pyntikova T."/>
            <person name="Ali J."/>
            <person name="Bieri T."/>
            <person name="Chinwalla A."/>
            <person name="Delehaunty A."/>
            <person name="Delehaunty K."/>
            <person name="Du H."/>
            <person name="Fewell G."/>
            <person name="Fulton L."/>
            <person name="Fulton R."/>
            <person name="Graves T.A."/>
            <person name="Hou S.-F."/>
            <person name="Latrielle P."/>
            <person name="Leonard S."/>
            <person name="Mardis E."/>
            <person name="Maupin R."/>
            <person name="McPherson J."/>
            <person name="Miner T."/>
            <person name="Nash W."/>
            <person name="Nguyen C."/>
            <person name="Ozersky P."/>
            <person name="Pepin K."/>
            <person name="Rock S."/>
            <person name="Rohlfing T."/>
            <person name="Scott K."/>
            <person name="Schultz B."/>
            <person name="Strong C."/>
            <person name="Tin-Wollam A."/>
            <person name="Yang S.-P."/>
            <person name="Waterston R.H."/>
            <person name="Wilson R.K."/>
            <person name="Rozen S."/>
            <person name="Page D.C."/>
        </authorList>
    </citation>
    <scope>NUCLEOTIDE SEQUENCE [MRNA]</scope>
    <source>
        <tissue>Testis</tissue>
    </source>
</reference>
<keyword id="KW-0472">Membrane</keyword>
<keyword id="KW-1185">Reference proteome</keyword>
<keyword id="KW-0812">Transmembrane</keyword>
<keyword id="KW-1133">Transmembrane helix</keyword>
<name>TTY13_HUMAN</name>
<protein>
    <recommendedName>
        <fullName>Putative transcript Y 13 protein</fullName>
    </recommendedName>
</protein>
<sequence length="58" mass="6256">MKTQDDGVLPPYDVNQLLGWDLNLSLFLGLCLMLLLAGSCLPSPGITGLSHGSNREDR</sequence>
<organism>
    <name type="scientific">Homo sapiens</name>
    <name type="common">Human</name>
    <dbReference type="NCBI Taxonomy" id="9606"/>
    <lineage>
        <taxon>Eukaryota</taxon>
        <taxon>Metazoa</taxon>
        <taxon>Chordata</taxon>
        <taxon>Craniata</taxon>
        <taxon>Vertebrata</taxon>
        <taxon>Euteleostomi</taxon>
        <taxon>Mammalia</taxon>
        <taxon>Eutheria</taxon>
        <taxon>Euarchontoglires</taxon>
        <taxon>Primates</taxon>
        <taxon>Haplorrhini</taxon>
        <taxon>Catarrhini</taxon>
        <taxon>Hominidae</taxon>
        <taxon>Homo</taxon>
    </lineage>
</organism>
<comment type="subcellular location">
    <subcellularLocation>
        <location evidence="1">Membrane</location>
        <topology evidence="1">Single-pass membrane protein</topology>
    </subcellularLocation>
</comment>
<comment type="caution">
    <text evidence="3">Could be the product of a pseudogene.</text>
</comment>
<gene>
    <name type="primary">TTTY13</name>
    <name type="synonym">TTY13</name>
</gene>
<proteinExistence type="uncertain"/>
<dbReference type="EMBL" id="AF332242">
    <property type="protein sequence ID" value="AAK13492.1"/>
    <property type="molecule type" value="mRNA"/>
</dbReference>
<dbReference type="BioMuta" id="HGNC:18494"/>
<dbReference type="AGR" id="HGNC:18494"/>
<dbReference type="GeneCards" id="TTTY13"/>
<dbReference type="HGNC" id="HGNC:18494">
    <property type="gene designation" value="TTTY13"/>
</dbReference>
<dbReference type="neXtProt" id="NX_Q9BZ97"/>
<dbReference type="InParanoid" id="Q9BZ97"/>
<dbReference type="PAN-GO" id="Q9BZ97">
    <property type="GO annotations" value="0 GO annotations based on evolutionary models"/>
</dbReference>
<dbReference type="Pharos" id="Q9BZ97">
    <property type="development level" value="Tdark"/>
</dbReference>
<dbReference type="Proteomes" id="UP000005640">
    <property type="component" value="Unplaced"/>
</dbReference>
<dbReference type="RNAct" id="Q9BZ97">
    <property type="molecule type" value="protein"/>
</dbReference>
<dbReference type="GO" id="GO:0016020">
    <property type="term" value="C:membrane"/>
    <property type="evidence" value="ECO:0007669"/>
    <property type="project" value="UniProtKB-SubCell"/>
</dbReference>
<feature type="chain" id="PRO_0000065686" description="Putative transcript Y 13 protein">
    <location>
        <begin position="1"/>
        <end position="58"/>
    </location>
</feature>
<feature type="transmembrane region" description="Helical" evidence="2">
    <location>
        <begin position="17"/>
        <end position="37"/>
    </location>
</feature>